<proteinExistence type="inferred from homology"/>
<organism>
    <name type="scientific">Plecturocebus moloch</name>
    <name type="common">Dusky titi monkey</name>
    <name type="synonym">Callicebus moloch</name>
    <dbReference type="NCBI Taxonomy" id="9523"/>
    <lineage>
        <taxon>Eukaryota</taxon>
        <taxon>Metazoa</taxon>
        <taxon>Chordata</taxon>
        <taxon>Craniata</taxon>
        <taxon>Vertebrata</taxon>
        <taxon>Euteleostomi</taxon>
        <taxon>Mammalia</taxon>
        <taxon>Eutheria</taxon>
        <taxon>Euarchontoglires</taxon>
        <taxon>Primates</taxon>
        <taxon>Haplorrhini</taxon>
        <taxon>Platyrrhini</taxon>
        <taxon>Pitheciidae</taxon>
        <taxon>Callicebinae</taxon>
        <taxon>Plecturocebus</taxon>
    </lineage>
</organism>
<protein>
    <recommendedName>
        <fullName>Caveolin-1</fullName>
    </recommendedName>
</protein>
<reference key="1">
    <citation type="submission" date="2005-11" db="EMBL/GenBank/DDBJ databases">
        <title>NISC comparative sequencing initiative.</title>
        <authorList>
            <person name="Antonellis A."/>
            <person name="Ayele K."/>
            <person name="Benjamin B."/>
            <person name="Blakesley R.W."/>
            <person name="Boakye A."/>
            <person name="Bouffard G.G."/>
            <person name="Brinkley C."/>
            <person name="Brooks S."/>
            <person name="Chu G."/>
            <person name="Coleman H."/>
            <person name="Engle J."/>
            <person name="Gestole M."/>
            <person name="Greene A."/>
            <person name="Guan X."/>
            <person name="Gupta J."/>
            <person name="Haghighi P."/>
            <person name="Han J."/>
            <person name="Hansen N."/>
            <person name="Ho S.-L."/>
            <person name="Hu P."/>
            <person name="Hunter G."/>
            <person name="Hurle B."/>
            <person name="Idol J.R."/>
            <person name="Kwong P."/>
            <person name="Laric P."/>
            <person name="Larson S."/>
            <person name="Lee-Lin S.-Q."/>
            <person name="Legaspi R."/>
            <person name="Madden M."/>
            <person name="Maduro Q.L."/>
            <person name="Maduro V.B."/>
            <person name="Margulies E.H."/>
            <person name="Masiello C."/>
            <person name="Maskeri B."/>
            <person name="McDowell J."/>
            <person name="Mojidi H.A."/>
            <person name="Mullikin J.C."/>
            <person name="Oestreicher J.S."/>
            <person name="Park M."/>
            <person name="Portnoy M.E."/>
            <person name="Prasad A."/>
            <person name="Puri O."/>
            <person name="Reddix-Dugue N."/>
            <person name="Schandler K."/>
            <person name="Schueler M.G."/>
            <person name="Sison C."/>
            <person name="Stantripop S."/>
            <person name="Stephen E."/>
            <person name="Taye A."/>
            <person name="Thomas J.W."/>
            <person name="Thomas P.J."/>
            <person name="Tsipouri V."/>
            <person name="Ung L."/>
            <person name="Vogt J.L."/>
            <person name="Wetherby K.D."/>
            <person name="Young A."/>
            <person name="Green E.D."/>
        </authorList>
    </citation>
    <scope>NUCLEOTIDE SEQUENCE [LARGE SCALE GENOMIC DNA]</scope>
</reference>
<feature type="initiator methionine" description="Removed" evidence="4">
    <location>
        <position position="1"/>
    </location>
</feature>
<feature type="chain" id="PRO_0000226329" description="Caveolin-1">
    <location>
        <begin position="2"/>
        <end position="178"/>
    </location>
</feature>
<feature type="topological domain" description="Cytoplasmic" evidence="6">
    <location>
        <begin position="2"/>
        <end position="104"/>
    </location>
</feature>
<feature type="intramembrane region" description="Helical" evidence="6">
    <location>
        <begin position="105"/>
        <end position="125"/>
    </location>
</feature>
<feature type="topological domain" description="Cytoplasmic" evidence="6">
    <location>
        <begin position="126"/>
        <end position="178"/>
    </location>
</feature>
<feature type="region of interest" description="Required for homooligomerization" evidence="4">
    <location>
        <begin position="2"/>
        <end position="94"/>
    </location>
</feature>
<feature type="region of interest" description="Interaction with CAVIN3" evidence="4">
    <location>
        <begin position="82"/>
        <end position="94"/>
    </location>
</feature>
<feature type="region of interest" description="Interacts with SPRY1, SPRY2, SPRY3 and SPRY4" evidence="3">
    <location>
        <begin position="131"/>
        <end position="142"/>
    </location>
</feature>
<feature type="region of interest" description="Interacts with SPRY1, SPRY2, and SPRY4" evidence="3">
    <location>
        <begin position="149"/>
        <end position="160"/>
    </location>
</feature>
<feature type="region of interest" description="Interacts with SPRY1, SPRY2, SPRY3 and SPRY4" evidence="3">
    <location>
        <begin position="167"/>
        <end position="178"/>
    </location>
</feature>
<feature type="modified residue" description="N-acetylserine" evidence="4">
    <location>
        <position position="2"/>
    </location>
</feature>
<feature type="modified residue" description="Phosphoserine" evidence="2">
    <location>
        <position position="2"/>
    </location>
</feature>
<feature type="modified residue" description="N6-acetyllysine; alternate" evidence="4">
    <location>
        <position position="5"/>
    </location>
</feature>
<feature type="modified residue" description="Phosphotyrosine" evidence="4">
    <location>
        <position position="6"/>
    </location>
</feature>
<feature type="modified residue" description="Phosphoserine" evidence="3">
    <location>
        <position position="9"/>
    </location>
</feature>
<feature type="modified residue" description="Phosphotyrosine; by ABL1" evidence="3">
    <location>
        <position position="14"/>
    </location>
</feature>
<feature type="modified residue" description="Phosphotyrosine" evidence="4">
    <location>
        <position position="25"/>
    </location>
</feature>
<feature type="modified residue" description="Phosphoserine" evidence="4">
    <location>
        <position position="37"/>
    </location>
</feature>
<feature type="lipid moiety-binding region" description="S-palmitoyl cysteine" evidence="1">
    <location>
        <position position="133"/>
    </location>
</feature>
<feature type="lipid moiety-binding region" description="S-palmitoyl cysteine" evidence="1">
    <location>
        <position position="143"/>
    </location>
</feature>
<feature type="lipid moiety-binding region" description="S-palmitoyl cysteine" evidence="1">
    <location>
        <position position="156"/>
    </location>
</feature>
<feature type="cross-link" description="Glycyl lysine isopeptide (Lys-Gly) (interchain with G-Cter in ubiquitin); alternate" evidence="4">
    <location>
        <position position="5"/>
    </location>
</feature>
<feature type="cross-link" description="Glycyl lysine isopeptide (Lys-Gly) (interchain with G-Cter in ubiquitin)" evidence="4">
    <location>
        <position position="26"/>
    </location>
</feature>
<feature type="cross-link" description="Glycyl lysine isopeptide (Lys-Gly) (interchain with G-Cter in ubiquitin)" evidence="4">
    <location>
        <position position="30"/>
    </location>
</feature>
<feature type="cross-link" description="Glycyl lysine isopeptide (Lys-Gly) (interchain with G-Cter in ubiquitin)" evidence="4">
    <location>
        <position position="39"/>
    </location>
</feature>
<feature type="cross-link" description="Glycyl lysine isopeptide (Lys-Gly) (interchain with G-Cter in ubiquitin)" evidence="4">
    <location>
        <position position="47"/>
    </location>
</feature>
<feature type="cross-link" description="Glycyl lysine isopeptide (Lys-Gly) (interchain with G-Cter in ubiquitin)" evidence="4">
    <location>
        <position position="57"/>
    </location>
</feature>
<keyword id="KW-0007">Acetylation</keyword>
<keyword id="KW-1003">Cell membrane</keyword>
<keyword id="KW-0333">Golgi apparatus</keyword>
<keyword id="KW-1017">Isopeptide bond</keyword>
<keyword id="KW-0449">Lipoprotein</keyword>
<keyword id="KW-0472">Membrane</keyword>
<keyword id="KW-0564">Palmitate</keyword>
<keyword id="KW-0597">Phosphoprotein</keyword>
<keyword id="KW-0832">Ubl conjugation</keyword>
<comment type="function">
    <text evidence="3 4">May act as a scaffolding protein within caveolar membranes. Forms a stable heterooligomeric complex with CAV2 that targets to lipid rafts and drives caveolae formation. Mediates the recruitment of CAVIN proteins (CAVIN1/2/3/4) to the caveolae (By similarity). Interacts directly with G-protein alpha subunits and can functionally regulate their activity (By similarity). Involved in the costimulatory signal essential for T-cell receptor (TCR)-mediated T-cell activation. Its binding to DPP4 induces T-cell proliferation and NF-kappa-B activation in a T-cell receptor/CD3-dependent manner (By similarity). Recruits CTNNB1 to caveolar membranes and may regulate CTNNB1-mediated signaling through the Wnt pathway (By similarity). Negatively regulates TGFB1-mediated activation of SMAD2/3 by mediating the internalization of TGFBR1 from membrane rafts leading to its subsequent degradation (By similarity). Binds 20(S)-hydroxycholesterol (20(S)-OHC) (By similarity).</text>
</comment>
<comment type="subunit">
    <text evidence="2 3 4 5">Homooligomer. Interacts with GLIPR2. Interacts with NOSTRIN (By similarity). Interacts with SNAP25 and STX1A (By similarity). Interacts (via the N-terminus) with DPP4; the interaction is direct (By similarity). Interacts with CTNNB1, CDH1 and JUP. Interacts with PACSIN2; this interaction induces membrane tubulation (By similarity). Interacts with SLC7A9 (By similarity). Interacts with BMX and BTK. Interacts with TGFBR1. Interacts with CAVIN3 (via leucine-zipper domain) in a cholesterol-sensitive manner. Interacts with CAVIN1. Interacts with EHD2 in a cholesterol-dependent manner. Forms a ternary complex with UBXN6 and VCP; mediates CAV1 targeting to lysosomes for degradation. Interacts with ABCG1; this interaction regulates ABCG1-mediated cholesterol efflux (By similarity). Interacts with NEU3; this interaction enhances NEU3 sialidase activity within caveola. Interacts (via C-terminus) with SPRY1, SPRY2 (via C-terminus), SPRY3, and SPRY4 (By similarity). Interacts with IGFBP5; this interaction allows trafficking of IGFBP5 from the plasma membrane to the nucleus (By similarity).</text>
</comment>
<comment type="subcellular location">
    <subcellularLocation>
        <location evidence="1">Golgi apparatus membrane</location>
        <topology evidence="1">Peripheral membrane protein</topology>
    </subcellularLocation>
    <subcellularLocation>
        <location evidence="1">Cell membrane</location>
        <topology evidence="1">Peripheral membrane protein</topology>
    </subcellularLocation>
    <subcellularLocation>
        <location evidence="3">Membrane</location>
        <location evidence="3">Caveola</location>
        <topology evidence="1">Peripheral membrane protein</topology>
    </subcellularLocation>
    <subcellularLocation>
        <location evidence="4">Membrane raft</location>
    </subcellularLocation>
    <text evidence="1">Colocalized with DPP4 in membrane rafts. Potential hairpin-like structure in the membrane. Membrane protein of caveolae (By similarity).</text>
</comment>
<comment type="PTM">
    <text evidence="4">Phosphorylated at Tyr-14 by ABL1 in response to oxidative stress.</text>
</comment>
<comment type="PTM">
    <text evidence="4">Ubiquitinated. Undergo monoubiquitination and multi- and/or polyubiquitination. Monoubiquitination of N-terminal lysines promotes integration in a ternary complex with UBXN6 and VCP which promotes oligomeric CAV1 targeting to lysosomes for degradation. Ubiquitinated by ZNRF1; leading to degradation and modulation of the TLR4-mediated immune response.</text>
</comment>
<comment type="similarity">
    <text evidence="7">Belongs to the caveolin family.</text>
</comment>
<evidence type="ECO:0000250" key="1"/>
<evidence type="ECO:0000250" key="2">
    <source>
        <dbReference type="UniProtKB" id="P41350"/>
    </source>
</evidence>
<evidence type="ECO:0000250" key="3">
    <source>
        <dbReference type="UniProtKB" id="P49817"/>
    </source>
</evidence>
<evidence type="ECO:0000250" key="4">
    <source>
        <dbReference type="UniProtKB" id="Q03135"/>
    </source>
</evidence>
<evidence type="ECO:0000250" key="5">
    <source>
        <dbReference type="UniProtKB" id="Q2IBA5"/>
    </source>
</evidence>
<evidence type="ECO:0000255" key="6"/>
<evidence type="ECO:0000305" key="7"/>
<sequence length="178" mass="20473">MSGGKYVDSEGHLYTVPIREQGNIYKPNNKAMADELSEKQVYDAHTKEIDLVNRDPKHLNDDVVKIDFEDVIAEPEGTHSFDGIWKASFTTFTVTKYWFYRLLSALFGIPMALIWGIYFAILSFLHIWAVVPCIKSFLIEIQCISRVYSIYIHTVCDPLFEAIGKIFSNVRISLQKEI</sequence>
<name>CAV1_PLEMO</name>
<accession>Q2QLC1</accession>
<dbReference type="EMBL" id="DP000019">
    <property type="protein sequence ID" value="ABB89788.1"/>
    <property type="molecule type" value="Genomic_DNA"/>
</dbReference>
<dbReference type="GO" id="GO:0005901">
    <property type="term" value="C:caveola"/>
    <property type="evidence" value="ECO:0000250"/>
    <property type="project" value="UniProtKB"/>
</dbReference>
<dbReference type="GO" id="GO:0005768">
    <property type="term" value="C:endosome"/>
    <property type="evidence" value="ECO:0000250"/>
    <property type="project" value="UniProtKB"/>
</dbReference>
<dbReference type="GO" id="GO:0005925">
    <property type="term" value="C:focal adhesion"/>
    <property type="evidence" value="ECO:0007669"/>
    <property type="project" value="TreeGrafter"/>
</dbReference>
<dbReference type="GO" id="GO:0000139">
    <property type="term" value="C:Golgi membrane"/>
    <property type="evidence" value="ECO:0007669"/>
    <property type="project" value="UniProtKB-SubCell"/>
</dbReference>
<dbReference type="GO" id="GO:0045121">
    <property type="term" value="C:membrane raft"/>
    <property type="evidence" value="ECO:0000250"/>
    <property type="project" value="UniProtKB"/>
</dbReference>
<dbReference type="GO" id="GO:0048471">
    <property type="term" value="C:perinuclear region of cytoplasm"/>
    <property type="evidence" value="ECO:0007669"/>
    <property type="project" value="TreeGrafter"/>
</dbReference>
<dbReference type="GO" id="GO:0042383">
    <property type="term" value="C:sarcolemma"/>
    <property type="evidence" value="ECO:0007669"/>
    <property type="project" value="TreeGrafter"/>
</dbReference>
<dbReference type="GO" id="GO:0060090">
    <property type="term" value="F:molecular adaptor activity"/>
    <property type="evidence" value="ECO:0007669"/>
    <property type="project" value="TreeGrafter"/>
</dbReference>
<dbReference type="GO" id="GO:0008142">
    <property type="term" value="F:oxysterol binding"/>
    <property type="evidence" value="ECO:0000250"/>
    <property type="project" value="UniProtKB"/>
</dbReference>
<dbReference type="GO" id="GO:0019901">
    <property type="term" value="F:protein kinase binding"/>
    <property type="evidence" value="ECO:0007669"/>
    <property type="project" value="TreeGrafter"/>
</dbReference>
<dbReference type="GO" id="GO:0044325">
    <property type="term" value="F:transmembrane transporter binding"/>
    <property type="evidence" value="ECO:0007669"/>
    <property type="project" value="TreeGrafter"/>
</dbReference>
<dbReference type="GO" id="GO:0070836">
    <property type="term" value="P:caveola assembly"/>
    <property type="evidence" value="ECO:0007669"/>
    <property type="project" value="InterPro"/>
</dbReference>
<dbReference type="GO" id="GO:0030154">
    <property type="term" value="P:cell differentiation"/>
    <property type="evidence" value="ECO:0007669"/>
    <property type="project" value="TreeGrafter"/>
</dbReference>
<dbReference type="GO" id="GO:0001937">
    <property type="term" value="P:negative regulation of endothelial cell proliferation"/>
    <property type="evidence" value="ECO:0007669"/>
    <property type="project" value="TreeGrafter"/>
</dbReference>
<dbReference type="GO" id="GO:0031623">
    <property type="term" value="P:receptor internalization"/>
    <property type="evidence" value="ECO:0000250"/>
    <property type="project" value="UniProtKB"/>
</dbReference>
<dbReference type="GO" id="GO:0051480">
    <property type="term" value="P:regulation of cytosolic calcium ion concentration"/>
    <property type="evidence" value="ECO:0007669"/>
    <property type="project" value="TreeGrafter"/>
</dbReference>
<dbReference type="GO" id="GO:0031295">
    <property type="term" value="P:T cell costimulation"/>
    <property type="evidence" value="ECO:0000250"/>
    <property type="project" value="UniProtKB"/>
</dbReference>
<dbReference type="InterPro" id="IPR001612">
    <property type="entry name" value="Caveolin"/>
</dbReference>
<dbReference type="InterPro" id="IPR018361">
    <property type="entry name" value="Caveolin_CS"/>
</dbReference>
<dbReference type="PANTHER" id="PTHR10844">
    <property type="entry name" value="CAVEOLIN"/>
    <property type="match status" value="1"/>
</dbReference>
<dbReference type="PANTHER" id="PTHR10844:SF18">
    <property type="entry name" value="CAVEOLIN-1"/>
    <property type="match status" value="1"/>
</dbReference>
<dbReference type="Pfam" id="PF01146">
    <property type="entry name" value="Caveolin"/>
    <property type="match status" value="1"/>
</dbReference>
<dbReference type="PROSITE" id="PS01210">
    <property type="entry name" value="CAVEOLIN"/>
    <property type="match status" value="1"/>
</dbReference>
<gene>
    <name type="primary">CAV1</name>
</gene>